<dbReference type="EC" id="3.6.4.-" evidence="1"/>
<dbReference type="EMBL" id="CP000469">
    <property type="protein sequence ID" value="ABK46813.1"/>
    <property type="molecule type" value="Genomic_DNA"/>
</dbReference>
<dbReference type="RefSeq" id="WP_011715770.1">
    <property type="nucleotide sequence ID" value="NC_008577.1"/>
</dbReference>
<dbReference type="SMR" id="A0KSP4"/>
<dbReference type="STRING" id="94122.Shewana3_0574"/>
<dbReference type="KEGG" id="shn:Shewana3_0574"/>
<dbReference type="eggNOG" id="COG0553">
    <property type="taxonomic scope" value="Bacteria"/>
</dbReference>
<dbReference type="HOGENOM" id="CLU_011520_0_0_6"/>
<dbReference type="OrthoDB" id="9814088at2"/>
<dbReference type="Proteomes" id="UP000002589">
    <property type="component" value="Chromosome"/>
</dbReference>
<dbReference type="GO" id="GO:0005524">
    <property type="term" value="F:ATP binding"/>
    <property type="evidence" value="ECO:0007669"/>
    <property type="project" value="UniProtKB-UniRule"/>
</dbReference>
<dbReference type="GO" id="GO:0003677">
    <property type="term" value="F:DNA binding"/>
    <property type="evidence" value="ECO:0007669"/>
    <property type="project" value="UniProtKB-KW"/>
</dbReference>
<dbReference type="GO" id="GO:0004386">
    <property type="term" value="F:helicase activity"/>
    <property type="evidence" value="ECO:0007669"/>
    <property type="project" value="UniProtKB-UniRule"/>
</dbReference>
<dbReference type="GO" id="GO:0016817">
    <property type="term" value="F:hydrolase activity, acting on acid anhydrides"/>
    <property type="evidence" value="ECO:0007669"/>
    <property type="project" value="InterPro"/>
</dbReference>
<dbReference type="GO" id="GO:0006355">
    <property type="term" value="P:regulation of DNA-templated transcription"/>
    <property type="evidence" value="ECO:0007669"/>
    <property type="project" value="UniProtKB-UniRule"/>
</dbReference>
<dbReference type="CDD" id="cd18011">
    <property type="entry name" value="DEXDc_RapA"/>
    <property type="match status" value="1"/>
</dbReference>
<dbReference type="CDD" id="cd18793">
    <property type="entry name" value="SF2_C_SNF"/>
    <property type="match status" value="1"/>
</dbReference>
<dbReference type="Gene3D" id="2.30.30.140">
    <property type="match status" value="1"/>
</dbReference>
<dbReference type="Gene3D" id="2.30.30.930">
    <property type="match status" value="1"/>
</dbReference>
<dbReference type="Gene3D" id="3.30.360.80">
    <property type="match status" value="1"/>
</dbReference>
<dbReference type="Gene3D" id="6.10.140.1500">
    <property type="match status" value="1"/>
</dbReference>
<dbReference type="Gene3D" id="6.10.140.2230">
    <property type="match status" value="1"/>
</dbReference>
<dbReference type="Gene3D" id="3.40.50.300">
    <property type="entry name" value="P-loop containing nucleotide triphosphate hydrolases"/>
    <property type="match status" value="1"/>
</dbReference>
<dbReference type="Gene3D" id="3.40.50.10810">
    <property type="entry name" value="Tandem AAA-ATPase domain"/>
    <property type="match status" value="1"/>
</dbReference>
<dbReference type="HAMAP" id="MF_01821">
    <property type="entry name" value="Helicase_RapA"/>
    <property type="match status" value="1"/>
</dbReference>
<dbReference type="InterPro" id="IPR014001">
    <property type="entry name" value="Helicase_ATP-bd"/>
</dbReference>
<dbReference type="InterPro" id="IPR001650">
    <property type="entry name" value="Helicase_C-like"/>
</dbReference>
<dbReference type="InterPro" id="IPR023949">
    <property type="entry name" value="Helicase_RapA"/>
</dbReference>
<dbReference type="InterPro" id="IPR027417">
    <property type="entry name" value="P-loop_NTPase"/>
</dbReference>
<dbReference type="InterPro" id="IPR022737">
    <property type="entry name" value="RapA_C"/>
</dbReference>
<dbReference type="InterPro" id="IPR038718">
    <property type="entry name" value="SNF2-like_sf"/>
</dbReference>
<dbReference type="InterPro" id="IPR049730">
    <property type="entry name" value="SNF2/RAD54-like_C"/>
</dbReference>
<dbReference type="InterPro" id="IPR000330">
    <property type="entry name" value="SNF2_N"/>
</dbReference>
<dbReference type="InterPro" id="IPR040765">
    <property type="entry name" value="Tudor_1_RapA"/>
</dbReference>
<dbReference type="InterPro" id="IPR040766">
    <property type="entry name" value="Tudor_2_RapA"/>
</dbReference>
<dbReference type="NCBIfam" id="NF003426">
    <property type="entry name" value="PRK04914.1"/>
    <property type="match status" value="1"/>
</dbReference>
<dbReference type="PANTHER" id="PTHR45766">
    <property type="entry name" value="DNA ANNEALING HELICASE AND ENDONUCLEASE ZRANB3 FAMILY MEMBER"/>
    <property type="match status" value="1"/>
</dbReference>
<dbReference type="PANTHER" id="PTHR45766:SF6">
    <property type="entry name" value="SWI_SNF-RELATED MATRIX-ASSOCIATED ACTIN-DEPENDENT REGULATOR OF CHROMATIN SUBFAMILY A-LIKE PROTEIN 1"/>
    <property type="match status" value="1"/>
</dbReference>
<dbReference type="Pfam" id="PF00271">
    <property type="entry name" value="Helicase_C"/>
    <property type="match status" value="1"/>
</dbReference>
<dbReference type="Pfam" id="PF12137">
    <property type="entry name" value="RapA_C"/>
    <property type="match status" value="1"/>
</dbReference>
<dbReference type="Pfam" id="PF00176">
    <property type="entry name" value="SNF2-rel_dom"/>
    <property type="match status" value="1"/>
</dbReference>
<dbReference type="Pfam" id="PF18339">
    <property type="entry name" value="Tudor_1_RapA"/>
    <property type="match status" value="1"/>
</dbReference>
<dbReference type="Pfam" id="PF18337">
    <property type="entry name" value="Tudor_RapA"/>
    <property type="match status" value="1"/>
</dbReference>
<dbReference type="SMART" id="SM00487">
    <property type="entry name" value="DEXDc"/>
    <property type="match status" value="1"/>
</dbReference>
<dbReference type="SMART" id="SM00490">
    <property type="entry name" value="HELICc"/>
    <property type="match status" value="1"/>
</dbReference>
<dbReference type="SUPFAM" id="SSF52540">
    <property type="entry name" value="P-loop containing nucleoside triphosphate hydrolases"/>
    <property type="match status" value="2"/>
</dbReference>
<dbReference type="PROSITE" id="PS51192">
    <property type="entry name" value="HELICASE_ATP_BIND_1"/>
    <property type="match status" value="1"/>
</dbReference>
<dbReference type="PROSITE" id="PS51194">
    <property type="entry name" value="HELICASE_CTER"/>
    <property type="match status" value="1"/>
</dbReference>
<gene>
    <name evidence="1" type="primary">rapA</name>
    <name type="ordered locus">Shewana3_0574</name>
</gene>
<sequence>MPFALGQRWISDTESELGLGTVVQVEGRMVTVLFPATGENRMFSRNEAPLTRVIYNPGDTVESHEGWSLSVEELTEKDGLVVYHGIHSETGEKVSLRETLLNHNIRFNKPQDRLFAGQIDRLDRFGIRYQCQLLRHQLATSDLLGLQGPRVGLIPHQMWIAHEVGRRYAPRVLLADEVGLGKTIEAGLIIHQQLLTGRAERVLIIVPDTLRHQWLVEMLRRFNLRFSVFDEDRCVEAFADHDNPFYTEQLVICSLELLRKKKRLDQALDADWDLLVVDEAHHLEWTEEAPSRAYQVVEALSEVVPGVLLLTATPDQLGHESHFARLRLLDPDRFYDYDAFLAEENSYKDVAVAAEALAGDAKLSDAAINSLTELLSEKDIAPSIRLIQAEDIDSELQQAARSELLQELLDRHGTGRVLYRNSRASVKGFPKRIFNAYPHAMPEQYLTAARVNEMMGGRKSLEAQAAQALSPEKLYQEFEDNSASWWKFDPRVDWLIEFLKSHRSKKVLIIASGADTALSLEEALRTREGIQATVFHEGMSIIERDKAGAYFAQEEGGAQALICSEIGSEGRNFQFASHLVLFDLPLNPDLLEQRIGRLDRIGQKNDIQIHLPYLQDTAQERLLNWYHQGLNAFELTCPSGHVLYSEFAEDLLNVLVGGDEDELTNLLNHTQSRYKELKHAMEQGRDKLLEINSHGGDKAKAIVERLAQSDQDTKLIGSVIRLWDIIGVDQEDKGENSIILRPSEHMMFPTYPGLHEDGVTVTFDRDTALSRDDIALITQEHPLVQTGLDLITGSDTGTTSVAILKNKALPAGTLFLELIYMADASAPKSSQLYRYLPPTPIRVLLDKNGNDLSAKVDYTSFDKQLSAVNRHIGSKLVTASQPILHPLFAKGEEYAQTAVNELVAQAREKMTSQLTGELDRLESLKAVNPNIREEELEYLRNQMQELSTYLDASQLQLDAIRMVLVSHV</sequence>
<reference key="1">
    <citation type="submission" date="2006-09" db="EMBL/GenBank/DDBJ databases">
        <title>Complete sequence of chromosome 1 of Shewanella sp. ANA-3.</title>
        <authorList>
            <person name="Copeland A."/>
            <person name="Lucas S."/>
            <person name="Lapidus A."/>
            <person name="Barry K."/>
            <person name="Detter J.C."/>
            <person name="Glavina del Rio T."/>
            <person name="Hammon N."/>
            <person name="Israni S."/>
            <person name="Dalin E."/>
            <person name="Tice H."/>
            <person name="Pitluck S."/>
            <person name="Chertkov O."/>
            <person name="Brettin T."/>
            <person name="Bruce D."/>
            <person name="Han C."/>
            <person name="Tapia R."/>
            <person name="Gilna P."/>
            <person name="Schmutz J."/>
            <person name="Larimer F."/>
            <person name="Land M."/>
            <person name="Hauser L."/>
            <person name="Kyrpides N."/>
            <person name="Kim E."/>
            <person name="Newman D."/>
            <person name="Salticov C."/>
            <person name="Konstantinidis K."/>
            <person name="Klappenback J."/>
            <person name="Tiedje J."/>
            <person name="Richardson P."/>
        </authorList>
    </citation>
    <scope>NUCLEOTIDE SEQUENCE [LARGE SCALE GENOMIC DNA]</scope>
    <source>
        <strain>ANA-3</strain>
    </source>
</reference>
<keyword id="KW-0010">Activator</keyword>
<keyword id="KW-0067">ATP-binding</keyword>
<keyword id="KW-0238">DNA-binding</keyword>
<keyword id="KW-0347">Helicase</keyword>
<keyword id="KW-0378">Hydrolase</keyword>
<keyword id="KW-0547">Nucleotide-binding</keyword>
<keyword id="KW-0804">Transcription</keyword>
<keyword id="KW-0805">Transcription regulation</keyword>
<accession>A0KSP4</accession>
<evidence type="ECO:0000255" key="1">
    <source>
        <dbReference type="HAMAP-Rule" id="MF_01821"/>
    </source>
</evidence>
<protein>
    <recommendedName>
        <fullName evidence="1">RNA polymerase-associated protein RapA</fullName>
        <ecNumber evidence="1">3.6.4.-</ecNumber>
    </recommendedName>
    <alternativeName>
        <fullName evidence="1">ATP-dependent helicase HepA</fullName>
    </alternativeName>
</protein>
<name>RAPA_SHESA</name>
<feature type="chain" id="PRO_1000088387" description="RNA polymerase-associated protein RapA">
    <location>
        <begin position="1"/>
        <end position="968"/>
    </location>
</feature>
<feature type="domain" description="Helicase ATP-binding" evidence="1">
    <location>
        <begin position="163"/>
        <end position="332"/>
    </location>
</feature>
<feature type="domain" description="Helicase C-terminal" evidence="1">
    <location>
        <begin position="491"/>
        <end position="655"/>
    </location>
</feature>
<feature type="short sequence motif" description="DEAH box">
    <location>
        <begin position="278"/>
        <end position="281"/>
    </location>
</feature>
<feature type="binding site" evidence="1">
    <location>
        <begin position="176"/>
        <end position="183"/>
    </location>
    <ligand>
        <name>ATP</name>
        <dbReference type="ChEBI" id="CHEBI:30616"/>
    </ligand>
</feature>
<comment type="function">
    <text evidence="1">Transcription regulator that activates transcription by stimulating RNA polymerase (RNAP) recycling in case of stress conditions such as supercoiled DNA or high salt concentrations. Probably acts by releasing the RNAP, when it is trapped or immobilized on tightly supercoiled DNA. Does not activate transcription on linear DNA. Probably not involved in DNA repair.</text>
</comment>
<comment type="subunit">
    <text evidence="1">Interacts with the RNAP. Has a higher affinity for the core RNAP than for the holoenzyme. Its ATPase activity is stimulated by binding to RNAP.</text>
</comment>
<comment type="similarity">
    <text evidence="1">Belongs to the SNF2/RAD54 helicase family. RapA subfamily.</text>
</comment>
<proteinExistence type="inferred from homology"/>
<organism>
    <name type="scientific">Shewanella sp. (strain ANA-3)</name>
    <dbReference type="NCBI Taxonomy" id="94122"/>
    <lineage>
        <taxon>Bacteria</taxon>
        <taxon>Pseudomonadati</taxon>
        <taxon>Pseudomonadota</taxon>
        <taxon>Gammaproteobacteria</taxon>
        <taxon>Alteromonadales</taxon>
        <taxon>Shewanellaceae</taxon>
        <taxon>Shewanella</taxon>
    </lineage>
</organism>